<dbReference type="EC" id="2.2.1.7" evidence="1"/>
<dbReference type="EMBL" id="CP000560">
    <property type="protein sequence ID" value="ABS74621.1"/>
    <property type="molecule type" value="Genomic_DNA"/>
</dbReference>
<dbReference type="RefSeq" id="WP_012117963.1">
    <property type="nucleotide sequence ID" value="NC_009725.2"/>
</dbReference>
<dbReference type="SMR" id="A7Z6J5"/>
<dbReference type="GeneID" id="93081398"/>
<dbReference type="KEGG" id="bay:RBAM_022600"/>
<dbReference type="HOGENOM" id="CLU_009227_1_4_9"/>
<dbReference type="UniPathway" id="UPA00064">
    <property type="reaction ID" value="UER00091"/>
</dbReference>
<dbReference type="Proteomes" id="UP000001120">
    <property type="component" value="Chromosome"/>
</dbReference>
<dbReference type="GO" id="GO:0005829">
    <property type="term" value="C:cytosol"/>
    <property type="evidence" value="ECO:0007669"/>
    <property type="project" value="TreeGrafter"/>
</dbReference>
<dbReference type="GO" id="GO:0008661">
    <property type="term" value="F:1-deoxy-D-xylulose-5-phosphate synthase activity"/>
    <property type="evidence" value="ECO:0007669"/>
    <property type="project" value="UniProtKB-UniRule"/>
</dbReference>
<dbReference type="GO" id="GO:0000287">
    <property type="term" value="F:magnesium ion binding"/>
    <property type="evidence" value="ECO:0007669"/>
    <property type="project" value="UniProtKB-UniRule"/>
</dbReference>
<dbReference type="GO" id="GO:0030976">
    <property type="term" value="F:thiamine pyrophosphate binding"/>
    <property type="evidence" value="ECO:0007669"/>
    <property type="project" value="UniProtKB-UniRule"/>
</dbReference>
<dbReference type="GO" id="GO:0052865">
    <property type="term" value="P:1-deoxy-D-xylulose 5-phosphate biosynthetic process"/>
    <property type="evidence" value="ECO:0007669"/>
    <property type="project" value="UniProtKB-UniPathway"/>
</dbReference>
<dbReference type="GO" id="GO:0019288">
    <property type="term" value="P:isopentenyl diphosphate biosynthetic process, methylerythritol 4-phosphate pathway"/>
    <property type="evidence" value="ECO:0007669"/>
    <property type="project" value="TreeGrafter"/>
</dbReference>
<dbReference type="GO" id="GO:0016114">
    <property type="term" value="P:terpenoid biosynthetic process"/>
    <property type="evidence" value="ECO:0007669"/>
    <property type="project" value="UniProtKB-UniRule"/>
</dbReference>
<dbReference type="GO" id="GO:0009228">
    <property type="term" value="P:thiamine biosynthetic process"/>
    <property type="evidence" value="ECO:0007669"/>
    <property type="project" value="UniProtKB-UniRule"/>
</dbReference>
<dbReference type="CDD" id="cd02007">
    <property type="entry name" value="TPP_DXS"/>
    <property type="match status" value="1"/>
</dbReference>
<dbReference type="CDD" id="cd07033">
    <property type="entry name" value="TPP_PYR_DXS_TK_like"/>
    <property type="match status" value="1"/>
</dbReference>
<dbReference type="FunFam" id="3.40.50.920:FF:000002">
    <property type="entry name" value="1-deoxy-D-xylulose-5-phosphate synthase"/>
    <property type="match status" value="1"/>
</dbReference>
<dbReference type="FunFam" id="3.40.50.970:FF:000030">
    <property type="entry name" value="1-deoxy-D-xylulose-5-phosphate synthase"/>
    <property type="match status" value="1"/>
</dbReference>
<dbReference type="Gene3D" id="3.40.50.920">
    <property type="match status" value="1"/>
</dbReference>
<dbReference type="Gene3D" id="3.40.50.970">
    <property type="match status" value="2"/>
</dbReference>
<dbReference type="HAMAP" id="MF_00315">
    <property type="entry name" value="DXP_synth"/>
    <property type="match status" value="1"/>
</dbReference>
<dbReference type="InterPro" id="IPR005477">
    <property type="entry name" value="Dxylulose-5-P_synthase"/>
</dbReference>
<dbReference type="InterPro" id="IPR029061">
    <property type="entry name" value="THDP-binding"/>
</dbReference>
<dbReference type="InterPro" id="IPR009014">
    <property type="entry name" value="Transketo_C/PFOR_II"/>
</dbReference>
<dbReference type="InterPro" id="IPR005475">
    <property type="entry name" value="Transketolase-like_Pyr-bd"/>
</dbReference>
<dbReference type="InterPro" id="IPR020826">
    <property type="entry name" value="Transketolase_BS"/>
</dbReference>
<dbReference type="InterPro" id="IPR033248">
    <property type="entry name" value="Transketolase_C"/>
</dbReference>
<dbReference type="InterPro" id="IPR049557">
    <property type="entry name" value="Transketolase_CS"/>
</dbReference>
<dbReference type="NCBIfam" id="TIGR00204">
    <property type="entry name" value="dxs"/>
    <property type="match status" value="1"/>
</dbReference>
<dbReference type="NCBIfam" id="NF003933">
    <property type="entry name" value="PRK05444.2-2"/>
    <property type="match status" value="1"/>
</dbReference>
<dbReference type="PANTHER" id="PTHR43322">
    <property type="entry name" value="1-D-DEOXYXYLULOSE 5-PHOSPHATE SYNTHASE-RELATED"/>
    <property type="match status" value="1"/>
</dbReference>
<dbReference type="PANTHER" id="PTHR43322:SF5">
    <property type="entry name" value="1-DEOXY-D-XYLULOSE-5-PHOSPHATE SYNTHASE, CHLOROPLASTIC"/>
    <property type="match status" value="1"/>
</dbReference>
<dbReference type="Pfam" id="PF13292">
    <property type="entry name" value="DXP_synthase_N"/>
    <property type="match status" value="1"/>
</dbReference>
<dbReference type="Pfam" id="PF02779">
    <property type="entry name" value="Transket_pyr"/>
    <property type="match status" value="1"/>
</dbReference>
<dbReference type="Pfam" id="PF02780">
    <property type="entry name" value="Transketolase_C"/>
    <property type="match status" value="1"/>
</dbReference>
<dbReference type="SMART" id="SM00861">
    <property type="entry name" value="Transket_pyr"/>
    <property type="match status" value="1"/>
</dbReference>
<dbReference type="SUPFAM" id="SSF52518">
    <property type="entry name" value="Thiamin diphosphate-binding fold (THDP-binding)"/>
    <property type="match status" value="2"/>
</dbReference>
<dbReference type="SUPFAM" id="SSF52922">
    <property type="entry name" value="TK C-terminal domain-like"/>
    <property type="match status" value="1"/>
</dbReference>
<dbReference type="PROSITE" id="PS00801">
    <property type="entry name" value="TRANSKETOLASE_1"/>
    <property type="match status" value="1"/>
</dbReference>
<dbReference type="PROSITE" id="PS00802">
    <property type="entry name" value="TRANSKETOLASE_2"/>
    <property type="match status" value="1"/>
</dbReference>
<organism>
    <name type="scientific">Bacillus velezensis (strain DSM 23117 / BGSC 10A6 / LMG 26770 / FZB42)</name>
    <name type="common">Bacillus amyloliquefaciens subsp. plantarum</name>
    <dbReference type="NCBI Taxonomy" id="326423"/>
    <lineage>
        <taxon>Bacteria</taxon>
        <taxon>Bacillati</taxon>
        <taxon>Bacillota</taxon>
        <taxon>Bacilli</taxon>
        <taxon>Bacillales</taxon>
        <taxon>Bacillaceae</taxon>
        <taxon>Bacillus</taxon>
        <taxon>Bacillus amyloliquefaciens group</taxon>
    </lineage>
</organism>
<gene>
    <name evidence="1" type="primary">dxs</name>
    <name type="ordered locus">RBAM_022600</name>
</gene>
<name>DXS_BACVZ</name>
<sequence>MDLLSIQDPSFLKKMSIEQLEELSEEIRNFLITSLSASGGHIGPNLGVVELTIALHKEFDSPKDKFLWDVGHQSYVHKLLTGRGKEFETLRQYKGLCGFPKRSESEHDVWETGHSSTSLSGAMGMAAARDIKGSKEYIIPIIGDGALTGGMALEALNHIGDEKKDMIVILNDNEMSIAPNVGAIHSMLGRLRTAGKYQWVKDELEYLFKRIPAVGGKLAATAERIKDSLKYMLVSGMFFEELGFTYLGPVDGHSYHELFENLQYAKKTKGPVLLHVITKKGKGYKPAETDTIGTWHGTGPYKINTGDFVKPKAAAPSWSGLVSGTVQELAREDDRIVAITPAMPVGSKLEGFAKEFPERMFDVGIAEQHAATMAAGMALQGMKPFLAIYSTFLQRAYDQVVHDICRQNANVFIGIDRAGLVGADGETHQGVFDIAFLRHIPNLVLMMPKDENEGRHMVNTALNYEEGPIAMRFPRGNGLGVKMDKELKTIPIGTWEVLRPGKDAVILTFGTTIEMALEAAEELQKEGLSVRVVNARFIKPIDKQMMKAILNEGLPILTIEEAVLEGGFGSTILEYAHDLGMYHTPIDRMGIPDRFIEHGSVTALLEEIGLTKAEVMNRIKLLMPPKTHKGIGS</sequence>
<keyword id="KW-0414">Isoprene biosynthesis</keyword>
<keyword id="KW-0460">Magnesium</keyword>
<keyword id="KW-0479">Metal-binding</keyword>
<keyword id="KW-0784">Thiamine biosynthesis</keyword>
<keyword id="KW-0786">Thiamine pyrophosphate</keyword>
<keyword id="KW-0808">Transferase</keyword>
<proteinExistence type="inferred from homology"/>
<feature type="chain" id="PRO_1000019008" description="1-deoxy-D-xylulose-5-phosphate synthase">
    <location>
        <begin position="1"/>
        <end position="633"/>
    </location>
</feature>
<feature type="binding site" evidence="1">
    <location>
        <position position="72"/>
    </location>
    <ligand>
        <name>thiamine diphosphate</name>
        <dbReference type="ChEBI" id="CHEBI:58937"/>
    </ligand>
</feature>
<feature type="binding site" evidence="1">
    <location>
        <begin position="113"/>
        <end position="115"/>
    </location>
    <ligand>
        <name>thiamine diphosphate</name>
        <dbReference type="ChEBI" id="CHEBI:58937"/>
    </ligand>
</feature>
<feature type="binding site" evidence="1">
    <location>
        <position position="144"/>
    </location>
    <ligand>
        <name>Mg(2+)</name>
        <dbReference type="ChEBI" id="CHEBI:18420"/>
    </ligand>
</feature>
<feature type="binding site" evidence="1">
    <location>
        <begin position="145"/>
        <end position="146"/>
    </location>
    <ligand>
        <name>thiamine diphosphate</name>
        <dbReference type="ChEBI" id="CHEBI:58937"/>
    </ligand>
</feature>
<feature type="binding site" evidence="1">
    <location>
        <position position="173"/>
    </location>
    <ligand>
        <name>Mg(2+)</name>
        <dbReference type="ChEBI" id="CHEBI:18420"/>
    </ligand>
</feature>
<feature type="binding site" evidence="1">
    <location>
        <position position="173"/>
    </location>
    <ligand>
        <name>thiamine diphosphate</name>
        <dbReference type="ChEBI" id="CHEBI:58937"/>
    </ligand>
</feature>
<feature type="binding site" evidence="1">
    <location>
        <position position="284"/>
    </location>
    <ligand>
        <name>thiamine diphosphate</name>
        <dbReference type="ChEBI" id="CHEBI:58937"/>
    </ligand>
</feature>
<feature type="binding site" evidence="1">
    <location>
        <position position="367"/>
    </location>
    <ligand>
        <name>thiamine diphosphate</name>
        <dbReference type="ChEBI" id="CHEBI:58937"/>
    </ligand>
</feature>
<reference key="1">
    <citation type="journal article" date="2007" name="Nat. Biotechnol.">
        <title>Comparative analysis of the complete genome sequence of the plant growth-promoting bacterium Bacillus amyloliquefaciens FZB42.</title>
        <authorList>
            <person name="Chen X.H."/>
            <person name="Koumoutsi A."/>
            <person name="Scholz R."/>
            <person name="Eisenreich A."/>
            <person name="Schneider K."/>
            <person name="Heinemeyer I."/>
            <person name="Morgenstern B."/>
            <person name="Voss B."/>
            <person name="Hess W.R."/>
            <person name="Reva O."/>
            <person name="Junge H."/>
            <person name="Voigt B."/>
            <person name="Jungblut P.R."/>
            <person name="Vater J."/>
            <person name="Suessmuth R."/>
            <person name="Liesegang H."/>
            <person name="Strittmatter A."/>
            <person name="Gottschalk G."/>
            <person name="Borriss R."/>
        </authorList>
    </citation>
    <scope>NUCLEOTIDE SEQUENCE [LARGE SCALE GENOMIC DNA]</scope>
    <source>
        <strain>DSM 23117 / BGSC 10A6 / LMG 26770 / FZB42</strain>
    </source>
</reference>
<comment type="function">
    <text evidence="1">Catalyzes the acyloin condensation reaction between C atoms 2 and 3 of pyruvate and glyceraldehyde 3-phosphate to yield 1-deoxy-D-xylulose-5-phosphate (DXP).</text>
</comment>
<comment type="catalytic activity">
    <reaction evidence="1">
        <text>D-glyceraldehyde 3-phosphate + pyruvate + H(+) = 1-deoxy-D-xylulose 5-phosphate + CO2</text>
        <dbReference type="Rhea" id="RHEA:12605"/>
        <dbReference type="ChEBI" id="CHEBI:15361"/>
        <dbReference type="ChEBI" id="CHEBI:15378"/>
        <dbReference type="ChEBI" id="CHEBI:16526"/>
        <dbReference type="ChEBI" id="CHEBI:57792"/>
        <dbReference type="ChEBI" id="CHEBI:59776"/>
        <dbReference type="EC" id="2.2.1.7"/>
    </reaction>
</comment>
<comment type="cofactor">
    <cofactor evidence="1">
        <name>Mg(2+)</name>
        <dbReference type="ChEBI" id="CHEBI:18420"/>
    </cofactor>
    <text evidence="1">Binds 1 Mg(2+) ion per subunit.</text>
</comment>
<comment type="cofactor">
    <cofactor evidence="1">
        <name>thiamine diphosphate</name>
        <dbReference type="ChEBI" id="CHEBI:58937"/>
    </cofactor>
    <text evidence="1">Binds 1 thiamine pyrophosphate per subunit.</text>
</comment>
<comment type="pathway">
    <text evidence="1">Metabolic intermediate biosynthesis; 1-deoxy-D-xylulose 5-phosphate biosynthesis; 1-deoxy-D-xylulose 5-phosphate from D-glyceraldehyde 3-phosphate and pyruvate: step 1/1.</text>
</comment>
<comment type="subunit">
    <text evidence="1">Homodimer.</text>
</comment>
<comment type="similarity">
    <text evidence="1">Belongs to the transketolase family. DXPS subfamily.</text>
</comment>
<protein>
    <recommendedName>
        <fullName evidence="1">1-deoxy-D-xylulose-5-phosphate synthase</fullName>
        <ecNumber evidence="1">2.2.1.7</ecNumber>
    </recommendedName>
    <alternativeName>
        <fullName evidence="1">1-deoxyxylulose-5-phosphate synthase</fullName>
        <shortName evidence="1">DXP synthase</shortName>
        <shortName evidence="1">DXPS</shortName>
    </alternativeName>
</protein>
<evidence type="ECO:0000255" key="1">
    <source>
        <dbReference type="HAMAP-Rule" id="MF_00315"/>
    </source>
</evidence>
<accession>A7Z6J5</accession>